<evidence type="ECO:0000255" key="1">
    <source>
        <dbReference type="HAMAP-Rule" id="MF_00662"/>
    </source>
</evidence>
<name>PSD_HALH5</name>
<protein>
    <recommendedName>
        <fullName evidence="1">Phosphatidylserine decarboxylase proenzyme</fullName>
        <ecNumber evidence="1">4.1.1.65</ecNumber>
    </recommendedName>
    <component>
        <recommendedName>
            <fullName evidence="1">Phosphatidylserine decarboxylase alpha chain</fullName>
        </recommendedName>
    </component>
    <component>
        <recommendedName>
            <fullName evidence="1">Phosphatidylserine decarboxylase beta chain</fullName>
        </recommendedName>
    </component>
</protein>
<dbReference type="EC" id="4.1.1.65" evidence="1"/>
<dbReference type="EMBL" id="BA000004">
    <property type="protein sequence ID" value="BAB05030.1"/>
    <property type="molecule type" value="Genomic_DNA"/>
</dbReference>
<dbReference type="PIR" id="G83813">
    <property type="entry name" value="G83813"/>
</dbReference>
<dbReference type="RefSeq" id="WP_010897478.1">
    <property type="nucleotide sequence ID" value="NC_002570.2"/>
</dbReference>
<dbReference type="SMR" id="Q9KDA3"/>
<dbReference type="STRING" id="272558.gene:10727205"/>
<dbReference type="GeneID" id="87596933"/>
<dbReference type="KEGG" id="bha:BH1311"/>
<dbReference type="eggNOG" id="COG0688">
    <property type="taxonomic scope" value="Bacteria"/>
</dbReference>
<dbReference type="HOGENOM" id="CLU_029061_4_0_9"/>
<dbReference type="OrthoDB" id="9802030at2"/>
<dbReference type="UniPathway" id="UPA00558">
    <property type="reaction ID" value="UER00616"/>
</dbReference>
<dbReference type="Proteomes" id="UP000001258">
    <property type="component" value="Chromosome"/>
</dbReference>
<dbReference type="GO" id="GO:0005886">
    <property type="term" value="C:plasma membrane"/>
    <property type="evidence" value="ECO:0007669"/>
    <property type="project" value="UniProtKB-SubCell"/>
</dbReference>
<dbReference type="GO" id="GO:0004609">
    <property type="term" value="F:phosphatidylserine decarboxylase activity"/>
    <property type="evidence" value="ECO:0007669"/>
    <property type="project" value="UniProtKB-UniRule"/>
</dbReference>
<dbReference type="GO" id="GO:0006646">
    <property type="term" value="P:phosphatidylethanolamine biosynthetic process"/>
    <property type="evidence" value="ECO:0007669"/>
    <property type="project" value="UniProtKB-UniRule"/>
</dbReference>
<dbReference type="HAMAP" id="MF_00662">
    <property type="entry name" value="PS_decarb_PSD_B_type1"/>
    <property type="match status" value="1"/>
</dbReference>
<dbReference type="InterPro" id="IPR003817">
    <property type="entry name" value="PS_Dcarbxylase"/>
</dbReference>
<dbReference type="InterPro" id="IPR033177">
    <property type="entry name" value="PSD-B"/>
</dbReference>
<dbReference type="InterPro" id="IPR033178">
    <property type="entry name" value="PSD_type1_pro"/>
</dbReference>
<dbReference type="NCBIfam" id="NF002853">
    <property type="entry name" value="PRK03140.1"/>
    <property type="match status" value="1"/>
</dbReference>
<dbReference type="NCBIfam" id="TIGR00163">
    <property type="entry name" value="PS_decarb"/>
    <property type="match status" value="1"/>
</dbReference>
<dbReference type="PANTHER" id="PTHR10067">
    <property type="entry name" value="PHOSPHATIDYLSERINE DECARBOXYLASE"/>
    <property type="match status" value="1"/>
</dbReference>
<dbReference type="PANTHER" id="PTHR10067:SF6">
    <property type="entry name" value="PHOSPHATIDYLSERINE DECARBOXYLASE PROENZYME, MITOCHONDRIAL"/>
    <property type="match status" value="1"/>
</dbReference>
<dbReference type="Pfam" id="PF02666">
    <property type="entry name" value="PS_Dcarbxylase"/>
    <property type="match status" value="1"/>
</dbReference>
<feature type="chain" id="PRO_0000029627" description="Phosphatidylserine decarboxylase beta chain" evidence="1">
    <location>
        <begin position="1"/>
        <end position="225"/>
    </location>
</feature>
<feature type="chain" id="PRO_0000029628" description="Phosphatidylserine decarboxylase alpha chain" evidence="1">
    <location>
        <begin position="226"/>
        <end position="259"/>
    </location>
</feature>
<feature type="active site" description="Charge relay system; for autoendoproteolytic cleavage activity" evidence="1">
    <location>
        <position position="86"/>
    </location>
</feature>
<feature type="active site" description="Charge relay system; for autoendoproteolytic cleavage activity" evidence="1">
    <location>
        <position position="142"/>
    </location>
</feature>
<feature type="active site" description="Charge relay system; for autoendoproteolytic cleavage activity" evidence="1">
    <location>
        <position position="226"/>
    </location>
</feature>
<feature type="active site" description="Schiff-base intermediate with substrate; via pyruvic acid; for decarboxylase activity" evidence="1">
    <location>
        <position position="226"/>
    </location>
</feature>
<feature type="site" description="Cleavage (non-hydrolytic); by autocatalysis" evidence="1">
    <location>
        <begin position="225"/>
        <end position="226"/>
    </location>
</feature>
<feature type="modified residue" description="Pyruvic acid (Ser); by autocatalysis" evidence="1">
    <location>
        <position position="226"/>
    </location>
</feature>
<gene>
    <name evidence="1" type="primary">psd</name>
    <name type="ordered locus">BH1311</name>
</gene>
<proteinExistence type="inferred from homology"/>
<keyword id="KW-1003">Cell membrane</keyword>
<keyword id="KW-0210">Decarboxylase</keyword>
<keyword id="KW-0444">Lipid biosynthesis</keyword>
<keyword id="KW-0443">Lipid metabolism</keyword>
<keyword id="KW-0456">Lyase</keyword>
<keyword id="KW-0472">Membrane</keyword>
<keyword id="KW-0594">Phospholipid biosynthesis</keyword>
<keyword id="KW-1208">Phospholipid metabolism</keyword>
<keyword id="KW-0670">Pyruvate</keyword>
<keyword id="KW-1185">Reference proteome</keyword>
<keyword id="KW-0865">Zymogen</keyword>
<reference key="1">
    <citation type="journal article" date="2000" name="Nucleic Acids Res.">
        <title>Complete genome sequence of the alkaliphilic bacterium Bacillus halodurans and genomic sequence comparison with Bacillus subtilis.</title>
        <authorList>
            <person name="Takami H."/>
            <person name="Nakasone K."/>
            <person name="Takaki Y."/>
            <person name="Maeno G."/>
            <person name="Sasaki R."/>
            <person name="Masui N."/>
            <person name="Fuji F."/>
            <person name="Hirama C."/>
            <person name="Nakamura Y."/>
            <person name="Ogasawara N."/>
            <person name="Kuhara S."/>
            <person name="Horikoshi K."/>
        </authorList>
    </citation>
    <scope>NUCLEOTIDE SEQUENCE [LARGE SCALE GENOMIC DNA]</scope>
    <source>
        <strain>ATCC BAA-125 / DSM 18197 / FERM 7344 / JCM 9153 / C-125</strain>
    </source>
</reference>
<comment type="function">
    <text evidence="1">Catalyzes the formation of phosphatidylethanolamine (PtdEtn) from phosphatidylserine (PtdSer).</text>
</comment>
<comment type="catalytic activity">
    <reaction evidence="1">
        <text>a 1,2-diacyl-sn-glycero-3-phospho-L-serine + H(+) = a 1,2-diacyl-sn-glycero-3-phosphoethanolamine + CO2</text>
        <dbReference type="Rhea" id="RHEA:20828"/>
        <dbReference type="ChEBI" id="CHEBI:15378"/>
        <dbReference type="ChEBI" id="CHEBI:16526"/>
        <dbReference type="ChEBI" id="CHEBI:57262"/>
        <dbReference type="ChEBI" id="CHEBI:64612"/>
        <dbReference type="EC" id="4.1.1.65"/>
    </reaction>
</comment>
<comment type="cofactor">
    <cofactor evidence="1">
        <name>pyruvate</name>
        <dbReference type="ChEBI" id="CHEBI:15361"/>
    </cofactor>
    <text evidence="1">Binds 1 pyruvoyl group covalently per subunit.</text>
</comment>
<comment type="pathway">
    <text evidence="1">Phospholipid metabolism; phosphatidylethanolamine biosynthesis; phosphatidylethanolamine from CDP-diacylglycerol: step 2/2.</text>
</comment>
<comment type="subunit">
    <text evidence="1">Heterodimer of a large membrane-associated beta subunit and a small pyruvoyl-containing alpha subunit.</text>
</comment>
<comment type="subcellular location">
    <subcellularLocation>
        <location evidence="1">Cell membrane</location>
        <topology evidence="1">Peripheral membrane protein</topology>
    </subcellularLocation>
</comment>
<comment type="PTM">
    <text evidence="1">Is synthesized initially as an inactive proenzyme. Formation of the active enzyme involves a self-maturation process in which the active site pyruvoyl group is generated from an internal serine residue via an autocatalytic post-translational modification. Two non-identical subunits are generated from the proenzyme in this reaction, and the pyruvate is formed at the N-terminus of the alpha chain, which is derived from the carboxyl end of the proenzyme. The autoendoproteolytic cleavage occurs by a canonical serine protease mechanism, in which the side chain hydroxyl group of the serine supplies its oxygen atom to form the C-terminus of the beta chain, while the remainder of the serine residue undergoes an oxidative deamination to produce ammonia and the pyruvoyl prosthetic group on the alpha chain. During this reaction, the Ser that is part of the protease active site of the proenzyme becomes the pyruvoyl prosthetic group, which constitutes an essential element of the active site of the mature decarboxylase.</text>
</comment>
<comment type="similarity">
    <text evidence="1">Belongs to the phosphatidylserine decarboxylase family. PSD-B subfamily. Prokaryotic type I sub-subfamily.</text>
</comment>
<accession>Q9KDA3</accession>
<organism>
    <name type="scientific">Halalkalibacterium halodurans (strain ATCC BAA-125 / DSM 18197 / FERM 7344 / JCM 9153 / C-125)</name>
    <name type="common">Bacillus halodurans</name>
    <dbReference type="NCBI Taxonomy" id="272558"/>
    <lineage>
        <taxon>Bacteria</taxon>
        <taxon>Bacillati</taxon>
        <taxon>Bacillota</taxon>
        <taxon>Bacilli</taxon>
        <taxon>Bacillales</taxon>
        <taxon>Bacillaceae</taxon>
        <taxon>Halalkalibacterium (ex Joshi et al. 2022)</taxon>
    </lineage>
</organism>
<sequence>MRKTFFRLCFELSSHPVLSSMLQAFTTSKASRWLIPSFVRVYNINGQEAEKPLHTYQSLQEVFTRTLTENCRPIDLSPKSIVSPVDGVLAEQGTLSDEANFVVKNQTYTLEEMLGGKEKAKLYREGTYLLFYLSPSHYHRIHSPVNGTIKEQWTLGNKSAPVNNLGLRYGKRPLSRNYRLLTELEAEEGRCIVAKIGALNVNSIVPTHQSEHVDKGEEIGYFAFGSSVMLFFEKGTIQLDHQPRAVEVKMGEKVGSWLR</sequence>